<name>Y127_UREPA</name>
<organism>
    <name type="scientific">Ureaplasma parvum serovar 3 (strain ATCC 700970)</name>
    <dbReference type="NCBI Taxonomy" id="273119"/>
    <lineage>
        <taxon>Bacteria</taxon>
        <taxon>Bacillati</taxon>
        <taxon>Mycoplasmatota</taxon>
        <taxon>Mycoplasmoidales</taxon>
        <taxon>Mycoplasmoidaceae</taxon>
        <taxon>Ureaplasma</taxon>
    </lineage>
</organism>
<feature type="chain" id="PRO_0000220801" description="Uncharacterized protein UU127">
    <location>
        <begin position="1"/>
        <end position="101"/>
    </location>
</feature>
<feature type="transmembrane region" description="Helical" evidence="1">
    <location>
        <begin position="3"/>
        <end position="23"/>
    </location>
</feature>
<feature type="transmembrane region" description="Helical" evidence="1">
    <location>
        <begin position="68"/>
        <end position="88"/>
    </location>
</feature>
<evidence type="ECO:0000255" key="1"/>
<evidence type="ECO:0000305" key="2"/>
<protein>
    <recommendedName>
        <fullName>Uncharacterized protein UU127</fullName>
    </recommendedName>
</protein>
<keyword id="KW-1003">Cell membrane</keyword>
<keyword id="KW-0472">Membrane</keyword>
<keyword id="KW-1185">Reference proteome</keyword>
<keyword id="KW-0812">Transmembrane</keyword>
<keyword id="KW-1133">Transmembrane helix</keyword>
<accession>Q9PR17</accession>
<gene>
    <name type="ordered locus">UU127</name>
</gene>
<sequence>MKIIGSAFLGIVFCILLAFAIIFGIEIDYYHQGDYLKYLNFLDKLHQYNKIDNSFEYSNHYESALIGVIVLTIICFLIFITPIIIIVITKIKEKKVINKKI</sequence>
<proteinExistence type="predicted"/>
<reference key="1">
    <citation type="journal article" date="2000" name="Nature">
        <title>The complete sequence of the mucosal pathogen Ureaplasma urealyticum.</title>
        <authorList>
            <person name="Glass J.I."/>
            <person name="Lefkowitz E.J."/>
            <person name="Glass J.S."/>
            <person name="Heiner C.R."/>
            <person name="Chen E.Y."/>
            <person name="Cassell G.H."/>
        </authorList>
    </citation>
    <scope>NUCLEOTIDE SEQUENCE [LARGE SCALE GENOMIC DNA]</scope>
    <source>
        <strain>ATCC 700970</strain>
    </source>
</reference>
<dbReference type="EMBL" id="AF222894">
    <property type="protein sequence ID" value="AAF30533.1"/>
    <property type="molecule type" value="Genomic_DNA"/>
</dbReference>
<dbReference type="RefSeq" id="WP_006688845.1">
    <property type="nucleotide sequence ID" value="NC_002162.1"/>
</dbReference>
<dbReference type="SMR" id="Q9PR17"/>
<dbReference type="STRING" id="273119.UU127"/>
<dbReference type="EnsemblBacteria" id="AAF30533">
    <property type="protein sequence ID" value="AAF30533"/>
    <property type="gene ID" value="UU127"/>
</dbReference>
<dbReference type="GeneID" id="29672754"/>
<dbReference type="KEGG" id="uur:UU127"/>
<dbReference type="HOGENOM" id="CLU_2290465_0_0_14"/>
<dbReference type="OrthoDB" id="9917966at2"/>
<dbReference type="Proteomes" id="UP000000423">
    <property type="component" value="Chromosome"/>
</dbReference>
<dbReference type="GO" id="GO:0005886">
    <property type="term" value="C:plasma membrane"/>
    <property type="evidence" value="ECO:0007669"/>
    <property type="project" value="UniProtKB-SubCell"/>
</dbReference>
<comment type="subcellular location">
    <subcellularLocation>
        <location evidence="2">Cell membrane</location>
        <topology evidence="2">Multi-pass membrane protein</topology>
    </subcellularLocation>
</comment>